<reference key="1">
    <citation type="journal article" date="1998" name="Microbiology">
        <title>The 172 kb prkA-addAB region from 83 degrees to 97 degrees of the Bacillus subtilis chromosome contains several dysfunctional genes, the glyB marker, many genes encoding transporter proteins, and the ubiquitous hit gene.</title>
        <authorList>
            <person name="Noback M.A."/>
            <person name="Holsappel S."/>
            <person name="Kiewiet R."/>
            <person name="Terpstra P."/>
            <person name="Wambutt R."/>
            <person name="Wedler H."/>
            <person name="Venema G."/>
            <person name="Bron S."/>
        </authorList>
    </citation>
    <scope>NUCLEOTIDE SEQUENCE [GENOMIC DNA]</scope>
    <source>
        <strain>168</strain>
    </source>
</reference>
<reference key="2">
    <citation type="journal article" date="1997" name="Nature">
        <title>The complete genome sequence of the Gram-positive bacterium Bacillus subtilis.</title>
        <authorList>
            <person name="Kunst F."/>
            <person name="Ogasawara N."/>
            <person name="Moszer I."/>
            <person name="Albertini A.M."/>
            <person name="Alloni G."/>
            <person name="Azevedo V."/>
            <person name="Bertero M.G."/>
            <person name="Bessieres P."/>
            <person name="Bolotin A."/>
            <person name="Borchert S."/>
            <person name="Borriss R."/>
            <person name="Boursier L."/>
            <person name="Brans A."/>
            <person name="Braun M."/>
            <person name="Brignell S.C."/>
            <person name="Bron S."/>
            <person name="Brouillet S."/>
            <person name="Bruschi C.V."/>
            <person name="Caldwell B."/>
            <person name="Capuano V."/>
            <person name="Carter N.M."/>
            <person name="Choi S.-K."/>
            <person name="Codani J.-J."/>
            <person name="Connerton I.F."/>
            <person name="Cummings N.J."/>
            <person name="Daniel R.A."/>
            <person name="Denizot F."/>
            <person name="Devine K.M."/>
            <person name="Duesterhoeft A."/>
            <person name="Ehrlich S.D."/>
            <person name="Emmerson P.T."/>
            <person name="Entian K.-D."/>
            <person name="Errington J."/>
            <person name="Fabret C."/>
            <person name="Ferrari E."/>
            <person name="Foulger D."/>
            <person name="Fritz C."/>
            <person name="Fujita M."/>
            <person name="Fujita Y."/>
            <person name="Fuma S."/>
            <person name="Galizzi A."/>
            <person name="Galleron N."/>
            <person name="Ghim S.-Y."/>
            <person name="Glaser P."/>
            <person name="Goffeau A."/>
            <person name="Golightly E.J."/>
            <person name="Grandi G."/>
            <person name="Guiseppi G."/>
            <person name="Guy B.J."/>
            <person name="Haga K."/>
            <person name="Haiech J."/>
            <person name="Harwood C.R."/>
            <person name="Henaut A."/>
            <person name="Hilbert H."/>
            <person name="Holsappel S."/>
            <person name="Hosono S."/>
            <person name="Hullo M.-F."/>
            <person name="Itaya M."/>
            <person name="Jones L.-M."/>
            <person name="Joris B."/>
            <person name="Karamata D."/>
            <person name="Kasahara Y."/>
            <person name="Klaerr-Blanchard M."/>
            <person name="Klein C."/>
            <person name="Kobayashi Y."/>
            <person name="Koetter P."/>
            <person name="Koningstein G."/>
            <person name="Krogh S."/>
            <person name="Kumano M."/>
            <person name="Kurita K."/>
            <person name="Lapidus A."/>
            <person name="Lardinois S."/>
            <person name="Lauber J."/>
            <person name="Lazarevic V."/>
            <person name="Lee S.-M."/>
            <person name="Levine A."/>
            <person name="Liu H."/>
            <person name="Masuda S."/>
            <person name="Mauel C."/>
            <person name="Medigue C."/>
            <person name="Medina N."/>
            <person name="Mellado R.P."/>
            <person name="Mizuno M."/>
            <person name="Moestl D."/>
            <person name="Nakai S."/>
            <person name="Noback M."/>
            <person name="Noone D."/>
            <person name="O'Reilly M."/>
            <person name="Ogawa K."/>
            <person name="Ogiwara A."/>
            <person name="Oudega B."/>
            <person name="Park S.-H."/>
            <person name="Parro V."/>
            <person name="Pohl T.M."/>
            <person name="Portetelle D."/>
            <person name="Porwollik S."/>
            <person name="Prescott A.M."/>
            <person name="Presecan E."/>
            <person name="Pujic P."/>
            <person name="Purnelle B."/>
            <person name="Rapoport G."/>
            <person name="Rey M."/>
            <person name="Reynolds S."/>
            <person name="Rieger M."/>
            <person name="Rivolta C."/>
            <person name="Rocha E."/>
            <person name="Roche B."/>
            <person name="Rose M."/>
            <person name="Sadaie Y."/>
            <person name="Sato T."/>
            <person name="Scanlan E."/>
            <person name="Schleich S."/>
            <person name="Schroeter R."/>
            <person name="Scoffone F."/>
            <person name="Sekiguchi J."/>
            <person name="Sekowska A."/>
            <person name="Seror S.J."/>
            <person name="Serror P."/>
            <person name="Shin B.-S."/>
            <person name="Soldo B."/>
            <person name="Sorokin A."/>
            <person name="Tacconi E."/>
            <person name="Takagi T."/>
            <person name="Takahashi H."/>
            <person name="Takemaru K."/>
            <person name="Takeuchi M."/>
            <person name="Tamakoshi A."/>
            <person name="Tanaka T."/>
            <person name="Terpstra P."/>
            <person name="Tognoni A."/>
            <person name="Tosato V."/>
            <person name="Uchiyama S."/>
            <person name="Vandenbol M."/>
            <person name="Vannier F."/>
            <person name="Vassarotti A."/>
            <person name="Viari A."/>
            <person name="Wambutt R."/>
            <person name="Wedler E."/>
            <person name="Wedler H."/>
            <person name="Weitzenegger T."/>
            <person name="Winters P."/>
            <person name="Wipat A."/>
            <person name="Yamamoto H."/>
            <person name="Yamane K."/>
            <person name="Yasumoto K."/>
            <person name="Yata K."/>
            <person name="Yoshida K."/>
            <person name="Yoshikawa H.-F."/>
            <person name="Zumstein E."/>
            <person name="Yoshikawa H."/>
            <person name="Danchin A."/>
        </authorList>
    </citation>
    <scope>NUCLEOTIDE SEQUENCE [LARGE SCALE GENOMIC DNA]</scope>
    <source>
        <strain>168</strain>
    </source>
</reference>
<reference key="3">
    <citation type="journal article" date="2011" name="Mol. Microbiol.">
        <title>A novel two-gene requirement for the octanoyltransfer reaction of Bacillus subtilis lipoic acid biosynthesis.</title>
        <authorList>
            <person name="Martin N."/>
            <person name="Christensen Q.H."/>
            <person name="Mansilla M.C."/>
            <person name="Cronan J.E."/>
            <person name="de Mendoza D."/>
        </authorList>
    </citation>
    <scope>GENE NAME</scope>
    <scope>FUNCTION</scope>
    <scope>CATALYTIC ACTIVITY</scope>
    <scope>PATHWAY</scope>
    <scope>DISRUPTION PHENOTYPE</scope>
    <source>
        <strain>168 / JH642</strain>
    </source>
</reference>
<comment type="function">
    <text evidence="3">Catalyzes both the ATP-dependent activation of exogenously supplied lipoate to lipoyl-AMP and the transfer of the activated lipoyl onto the lipoyl domains of lipoate-dependent enzymes. Is also able to use octanoate as substrate.</text>
</comment>
<comment type="catalytic activity">
    <reaction evidence="3">
        <text>L-lysyl-[lipoyl-carrier protein] + (R)-lipoate + ATP = N(6)-[(R)-lipoyl]-L-lysyl-[lipoyl-carrier protein] + AMP + diphosphate + H(+)</text>
        <dbReference type="Rhea" id="RHEA:49288"/>
        <dbReference type="Rhea" id="RHEA-COMP:10500"/>
        <dbReference type="Rhea" id="RHEA-COMP:10502"/>
        <dbReference type="ChEBI" id="CHEBI:15378"/>
        <dbReference type="ChEBI" id="CHEBI:29969"/>
        <dbReference type="ChEBI" id="CHEBI:30616"/>
        <dbReference type="ChEBI" id="CHEBI:33019"/>
        <dbReference type="ChEBI" id="CHEBI:83088"/>
        <dbReference type="ChEBI" id="CHEBI:83099"/>
        <dbReference type="ChEBI" id="CHEBI:456215"/>
        <dbReference type="EC" id="6.3.1.20"/>
    </reaction>
</comment>
<comment type="pathway">
    <text evidence="3">Protein modification; protein lipoylation via exogenous pathway; protein N(6)-(lipoyl)lysine from lipoate: step 1/2.</text>
</comment>
<comment type="pathway">
    <text evidence="3">Protein modification; protein lipoylation via exogenous pathway; protein N(6)-(lipoyl)lysine from lipoate: step 2/2.</text>
</comment>
<comment type="subcellular location">
    <subcellularLocation>
        <location evidence="1">Cytoplasm</location>
    </subcellularLocation>
</comment>
<comment type="disruption phenotype">
    <text evidence="3">Cells lacking this gene grow normally in minimal medium in the absence of supplements and have a wild-type pattern of lipoylated proteins. However, a double mutant strain lacking both lplJ and lipM is unable to grow in minimal medium either in the presence or in the absence of lipoic acid, indicating that LplJ is the sole B.subtilis lipoic acid salvage enzyme.</text>
</comment>
<comment type="miscellaneous">
    <text evidence="1">In the transfer reaction, the free carboxyl group of lipoic acid is attached via an amide linkage to the epsilon-amino group of a specific lysine residue of lipoyl domains of lipoate-dependent enzymes.</text>
</comment>
<comment type="similarity">
    <text evidence="4">Belongs to the LplA family.</text>
</comment>
<protein>
    <recommendedName>
        <fullName>Lipoate-protein ligase LplJ</fullName>
        <ecNumber evidence="3">6.3.1.20</ecNumber>
    </recommendedName>
    <alternativeName>
        <fullName>Lipoate--protein ligase</fullName>
    </alternativeName>
</protein>
<dbReference type="EC" id="6.3.1.20" evidence="3"/>
<dbReference type="EMBL" id="Y14083">
    <property type="protein sequence ID" value="CAA74531.1"/>
    <property type="molecule type" value="Genomic_DNA"/>
</dbReference>
<dbReference type="EMBL" id="AL009126">
    <property type="protein sequence ID" value="CAB12865.1"/>
    <property type="molecule type" value="Genomic_DNA"/>
</dbReference>
<dbReference type="PIR" id="G69830">
    <property type="entry name" value="G69830"/>
</dbReference>
<dbReference type="RefSeq" id="NP_388906.1">
    <property type="nucleotide sequence ID" value="NC_000964.3"/>
</dbReference>
<dbReference type="RefSeq" id="WP_003244914.1">
    <property type="nucleotide sequence ID" value="NZ_OZ025638.1"/>
</dbReference>
<dbReference type="SMR" id="O07608"/>
<dbReference type="FunCoup" id="O07608">
    <property type="interactions" value="400"/>
</dbReference>
<dbReference type="IntAct" id="O07608">
    <property type="interactions" value="1"/>
</dbReference>
<dbReference type="MINT" id="O07608"/>
<dbReference type="STRING" id="224308.BSU10250"/>
<dbReference type="PaxDb" id="224308-BSU10250"/>
<dbReference type="EnsemblBacteria" id="CAB12865">
    <property type="protein sequence ID" value="CAB12865"/>
    <property type="gene ID" value="BSU_10250"/>
</dbReference>
<dbReference type="GeneID" id="939310"/>
<dbReference type="KEGG" id="bsu:BSU10250"/>
<dbReference type="PATRIC" id="fig|224308.179.peg.1101"/>
<dbReference type="eggNOG" id="COG0095">
    <property type="taxonomic scope" value="Bacteria"/>
</dbReference>
<dbReference type="InParanoid" id="O07608"/>
<dbReference type="OrthoDB" id="9788148at2"/>
<dbReference type="PhylomeDB" id="O07608"/>
<dbReference type="BioCyc" id="BSUB:BSU10250-MONOMER"/>
<dbReference type="BioCyc" id="MetaCyc:BSU10250-MONOMER"/>
<dbReference type="UniPathway" id="UPA00537">
    <property type="reaction ID" value="UER00594"/>
</dbReference>
<dbReference type="UniPathway" id="UPA00537">
    <property type="reaction ID" value="UER00595"/>
</dbReference>
<dbReference type="Proteomes" id="UP000001570">
    <property type="component" value="Chromosome"/>
</dbReference>
<dbReference type="GO" id="GO:0005737">
    <property type="term" value="C:cytoplasm"/>
    <property type="evidence" value="ECO:0000318"/>
    <property type="project" value="GO_Central"/>
</dbReference>
<dbReference type="GO" id="GO:0005524">
    <property type="term" value="F:ATP binding"/>
    <property type="evidence" value="ECO:0007669"/>
    <property type="project" value="UniProtKB-KW"/>
</dbReference>
<dbReference type="GO" id="GO:0016979">
    <property type="term" value="F:lipoate-protein ligase activity"/>
    <property type="evidence" value="ECO:0000314"/>
    <property type="project" value="UniProtKB"/>
</dbReference>
<dbReference type="GO" id="GO:0017118">
    <property type="term" value="F:lipoyltransferase activity"/>
    <property type="evidence" value="ECO:0000314"/>
    <property type="project" value="UniProtKB"/>
</dbReference>
<dbReference type="GO" id="GO:0009249">
    <property type="term" value="P:protein lipoylation"/>
    <property type="evidence" value="ECO:0000314"/>
    <property type="project" value="UniProtKB"/>
</dbReference>
<dbReference type="CDD" id="cd16443">
    <property type="entry name" value="LplA"/>
    <property type="match status" value="1"/>
</dbReference>
<dbReference type="FunFam" id="3.30.930.10:FF:000072">
    <property type="entry name" value="Lipoate--protein ligase"/>
    <property type="match status" value="1"/>
</dbReference>
<dbReference type="Gene3D" id="3.30.930.10">
    <property type="entry name" value="Bira Bifunctional Protein, Domain 2"/>
    <property type="match status" value="1"/>
</dbReference>
<dbReference type="Gene3D" id="3.30.390.50">
    <property type="entry name" value="CO dehydrogenase flavoprotein, C-terminal domain"/>
    <property type="match status" value="1"/>
</dbReference>
<dbReference type="InterPro" id="IPR045864">
    <property type="entry name" value="aa-tRNA-synth_II/BPL/LPL"/>
</dbReference>
<dbReference type="InterPro" id="IPR004143">
    <property type="entry name" value="BPL_LPL_catalytic"/>
</dbReference>
<dbReference type="InterPro" id="IPR019491">
    <property type="entry name" value="Lipoate_protein_ligase_C"/>
</dbReference>
<dbReference type="InterPro" id="IPR004562">
    <property type="entry name" value="LipoylTrfase_LipoateP_Ligase"/>
</dbReference>
<dbReference type="NCBIfam" id="TIGR00545">
    <property type="entry name" value="lipoyltrans"/>
    <property type="match status" value="1"/>
</dbReference>
<dbReference type="PANTHER" id="PTHR12561">
    <property type="entry name" value="LIPOATE-PROTEIN LIGASE"/>
    <property type="match status" value="1"/>
</dbReference>
<dbReference type="PANTHER" id="PTHR12561:SF3">
    <property type="entry name" value="LIPOYLTRANSFERASE 1, MITOCHONDRIAL"/>
    <property type="match status" value="1"/>
</dbReference>
<dbReference type="Pfam" id="PF10437">
    <property type="entry name" value="Lip_prot_lig_C"/>
    <property type="match status" value="1"/>
</dbReference>
<dbReference type="Pfam" id="PF21948">
    <property type="entry name" value="LplA-B_cat"/>
    <property type="match status" value="1"/>
</dbReference>
<dbReference type="SUPFAM" id="SSF55681">
    <property type="entry name" value="Class II aaRS and biotin synthetases"/>
    <property type="match status" value="1"/>
</dbReference>
<dbReference type="SUPFAM" id="SSF82649">
    <property type="entry name" value="SufE/NifU"/>
    <property type="match status" value="1"/>
</dbReference>
<dbReference type="PROSITE" id="PS51733">
    <property type="entry name" value="BPL_LPL_CATALYTIC"/>
    <property type="match status" value="1"/>
</dbReference>
<proteinExistence type="evidence at protein level"/>
<gene>
    <name type="primary">lplJ</name>
    <name type="synonym">yhfJ</name>
    <name type="ordered locus">BSU10250</name>
</gene>
<keyword id="KW-0067">ATP-binding</keyword>
<keyword id="KW-0963">Cytoplasm</keyword>
<keyword id="KW-0436">Ligase</keyword>
<keyword id="KW-0547">Nucleotide-binding</keyword>
<keyword id="KW-1185">Reference proteome</keyword>
<evidence type="ECO:0000250" key="1"/>
<evidence type="ECO:0000255" key="2">
    <source>
        <dbReference type="PROSITE-ProRule" id="PRU01067"/>
    </source>
</evidence>
<evidence type="ECO:0000269" key="3">
    <source>
    </source>
</evidence>
<evidence type="ECO:0000305" key="4"/>
<sequence length="331" mass="38020">MLFIDNQNINDPRINLAIEEYCVKHLDPEQQYLLFYVNQPSIIIGKNQNTIEEINTKYVEENGIIVVRRLSGGGAVYHDLGNLNFSFITKDDGDSFHNFKKFTEPVIQALHQLGVEAELSGRNDIVVDGRKISGNAQFATKGRIFSHGTLMFDSAIDHVVSALKVKKDKIESKGIKSIRSRVANISEFLDDKMTTEEFRSHLLRHIFNTNDVGNVPEYKLTEKDWETIHQISKERYQNWDWNYGRSPKFNLNHSKRYPVGSIDLHLEVKKGKIEDCKIFGDFFGVGDVSEIENLLVGKQYERSVIADVLEGVNLKHYFGNITKEDFLDLIY</sequence>
<organism>
    <name type="scientific">Bacillus subtilis (strain 168)</name>
    <dbReference type="NCBI Taxonomy" id="224308"/>
    <lineage>
        <taxon>Bacteria</taxon>
        <taxon>Bacillati</taxon>
        <taxon>Bacillota</taxon>
        <taxon>Bacilli</taxon>
        <taxon>Bacillales</taxon>
        <taxon>Bacillaceae</taxon>
        <taxon>Bacillus</taxon>
    </lineage>
</organism>
<feature type="chain" id="PRO_0000386531" description="Lipoate-protein ligase LplJ">
    <location>
        <begin position="1"/>
        <end position="331"/>
    </location>
</feature>
<feature type="domain" description="BPL/LPL catalytic" evidence="2">
    <location>
        <begin position="27"/>
        <end position="214"/>
    </location>
</feature>
<feature type="binding site" evidence="1">
    <location>
        <position position="69"/>
    </location>
    <ligand>
        <name>ATP</name>
        <dbReference type="ChEBI" id="CHEBI:30616"/>
    </ligand>
</feature>
<feature type="binding site" evidence="1">
    <location>
        <begin position="74"/>
        <end position="77"/>
    </location>
    <ligand>
        <name>ATP</name>
        <dbReference type="ChEBI" id="CHEBI:30616"/>
    </ligand>
</feature>
<feature type="binding site" evidence="1">
    <location>
        <position position="131"/>
    </location>
    <ligand>
        <name>(R)-lipoate</name>
        <dbReference type="ChEBI" id="CHEBI:83088"/>
    </ligand>
</feature>
<feature type="binding site" evidence="1">
    <location>
        <position position="131"/>
    </location>
    <ligand>
        <name>ATP</name>
        <dbReference type="ChEBI" id="CHEBI:30616"/>
    </ligand>
</feature>
<accession>O07608</accession>
<accession>Q796U1</accession>
<name>LPLJ_BACSU</name>